<evidence type="ECO:0000250" key="1">
    <source>
        <dbReference type="UniProtKB" id="A0A1D8PI78"/>
    </source>
</evidence>
<evidence type="ECO:0000250" key="2">
    <source>
        <dbReference type="UniProtKB" id="Q12328"/>
    </source>
</evidence>
<evidence type="ECO:0000255" key="3"/>
<evidence type="ECO:0000305" key="4"/>
<keyword id="KW-1015">Disulfide bond</keyword>
<keyword id="KW-0472">Membrane</keyword>
<keyword id="KW-0496">Mitochondrion</keyword>
<keyword id="KW-0999">Mitochondrion inner membrane</keyword>
<keyword id="KW-0653">Protein transport</keyword>
<keyword id="KW-1185">Reference proteome</keyword>
<keyword id="KW-0811">Translocation</keyword>
<keyword id="KW-0812">Transmembrane</keyword>
<keyword id="KW-1133">Transmembrane helix</keyword>
<keyword id="KW-0813">Transport</keyword>
<sequence>MVYRGFGLEYLSPPEKKAFGELSPDEQGERGAEMVVGFMSSCPGKSVISGATGFALGGVLGLFMASMAYDTPLHTPVPGGMSGAVQQMADLPLRQQVKLQFADMGKRAYSSAKNFGYIGMIYAGVECAVESLRAKNDIYNGITAGCITGGGLAYKSGPQAALVGCAGFAAFSAAIDMYMKSEDGRPPENDFKQ</sequence>
<dbReference type="EMBL" id="CR380953">
    <property type="protein sequence ID" value="CAG59534.1"/>
    <property type="molecule type" value="Genomic_DNA"/>
</dbReference>
<dbReference type="RefSeq" id="XP_446607.1">
    <property type="nucleotide sequence ID" value="XM_446607.1"/>
</dbReference>
<dbReference type="SMR" id="Q6FT37"/>
<dbReference type="FunCoup" id="Q6FT37">
    <property type="interactions" value="702"/>
</dbReference>
<dbReference type="STRING" id="284593.Q6FT37"/>
<dbReference type="EnsemblFungi" id="CAGL0G05654g-T">
    <property type="protein sequence ID" value="CAGL0G05654g-T-p1"/>
    <property type="gene ID" value="CAGL0G05654g"/>
</dbReference>
<dbReference type="KEGG" id="cgr:2888408"/>
<dbReference type="CGD" id="CAL0130616">
    <property type="gene designation" value="CAGL0G05654g"/>
</dbReference>
<dbReference type="VEuPathDB" id="FungiDB:B1J91_G05654g"/>
<dbReference type="VEuPathDB" id="FungiDB:CAGL0G05654g"/>
<dbReference type="eggNOG" id="KOG3225">
    <property type="taxonomic scope" value="Eukaryota"/>
</dbReference>
<dbReference type="HOGENOM" id="CLU_091077_1_0_1"/>
<dbReference type="InParanoid" id="Q6FT37"/>
<dbReference type="Proteomes" id="UP000002428">
    <property type="component" value="Chromosome G"/>
</dbReference>
<dbReference type="GO" id="GO:0042721">
    <property type="term" value="C:TIM22 mitochondrial import inner membrane insertion complex"/>
    <property type="evidence" value="ECO:0007669"/>
    <property type="project" value="EnsemblFungi"/>
</dbReference>
<dbReference type="GO" id="GO:0030943">
    <property type="term" value="F:mitochondrion targeting sequence binding"/>
    <property type="evidence" value="ECO:0007669"/>
    <property type="project" value="EnsemblFungi"/>
</dbReference>
<dbReference type="GO" id="GO:0008320">
    <property type="term" value="F:protein transmembrane transporter activity"/>
    <property type="evidence" value="ECO:0007669"/>
    <property type="project" value="EnsemblFungi"/>
</dbReference>
<dbReference type="GO" id="GO:0005198">
    <property type="term" value="F:structural molecule activity"/>
    <property type="evidence" value="ECO:0007669"/>
    <property type="project" value="EnsemblFungi"/>
</dbReference>
<dbReference type="GO" id="GO:0045039">
    <property type="term" value="P:protein insertion into mitochondrial inner membrane"/>
    <property type="evidence" value="ECO:0007669"/>
    <property type="project" value="EnsemblFungi"/>
</dbReference>
<dbReference type="InterPro" id="IPR039175">
    <property type="entry name" value="TIM22"/>
</dbReference>
<dbReference type="PANTHER" id="PTHR14110">
    <property type="entry name" value="MITOCHONDRIAL IMPORT INNER MEMBRANE TRANSLOCASE SUBUNIT TIM22"/>
    <property type="match status" value="1"/>
</dbReference>
<dbReference type="PANTHER" id="PTHR14110:SF0">
    <property type="entry name" value="MITOCHONDRIAL IMPORT INNER MEMBRANE TRANSLOCASE SUBUNIT TIM22"/>
    <property type="match status" value="1"/>
</dbReference>
<dbReference type="Pfam" id="PF02466">
    <property type="entry name" value="Tim17"/>
    <property type="match status" value="1"/>
</dbReference>
<organism>
    <name type="scientific">Candida glabrata (strain ATCC 2001 / BCRC 20586 / JCM 3761 / NBRC 0622 / NRRL Y-65 / CBS 138)</name>
    <name type="common">Yeast</name>
    <name type="synonym">Nakaseomyces glabratus</name>
    <dbReference type="NCBI Taxonomy" id="284593"/>
    <lineage>
        <taxon>Eukaryota</taxon>
        <taxon>Fungi</taxon>
        <taxon>Dikarya</taxon>
        <taxon>Ascomycota</taxon>
        <taxon>Saccharomycotina</taxon>
        <taxon>Saccharomycetes</taxon>
        <taxon>Saccharomycetales</taxon>
        <taxon>Saccharomycetaceae</taxon>
        <taxon>Nakaseomyces</taxon>
    </lineage>
</organism>
<accession>Q6FT37</accession>
<feature type="chain" id="PRO_0000228088" description="Mitochondrial import inner membrane translocase subunit TIM22">
    <location>
        <begin position="1"/>
        <end position="193"/>
    </location>
</feature>
<feature type="transmembrane region" description="Helical" evidence="3">
    <location>
        <begin position="47"/>
        <end position="67"/>
    </location>
</feature>
<feature type="transmembrane region" description="Helical" evidence="3">
    <location>
        <begin position="138"/>
        <end position="154"/>
    </location>
</feature>
<feature type="transmembrane region" description="Helical" evidence="3">
    <location>
        <begin position="159"/>
        <end position="179"/>
    </location>
</feature>
<feature type="disulfide bond" evidence="1">
    <location>
        <begin position="42"/>
        <end position="127"/>
    </location>
</feature>
<feature type="disulfide bond" evidence="1">
    <location>
        <begin position="146"/>
        <end position="165"/>
    </location>
</feature>
<protein>
    <recommendedName>
        <fullName>Mitochondrial import inner membrane translocase subunit TIM22</fullName>
    </recommendedName>
</protein>
<proteinExistence type="inferred from homology"/>
<name>TIM22_CANGA</name>
<gene>
    <name type="primary">TIM22</name>
    <name type="ordered locus">CAGL0G05654g</name>
</gene>
<reference key="1">
    <citation type="journal article" date="2004" name="Nature">
        <title>Genome evolution in yeasts.</title>
        <authorList>
            <person name="Dujon B."/>
            <person name="Sherman D."/>
            <person name="Fischer G."/>
            <person name="Durrens P."/>
            <person name="Casaregola S."/>
            <person name="Lafontaine I."/>
            <person name="de Montigny J."/>
            <person name="Marck C."/>
            <person name="Neuveglise C."/>
            <person name="Talla E."/>
            <person name="Goffard N."/>
            <person name="Frangeul L."/>
            <person name="Aigle M."/>
            <person name="Anthouard V."/>
            <person name="Babour A."/>
            <person name="Barbe V."/>
            <person name="Barnay S."/>
            <person name="Blanchin S."/>
            <person name="Beckerich J.-M."/>
            <person name="Beyne E."/>
            <person name="Bleykasten C."/>
            <person name="Boisrame A."/>
            <person name="Boyer J."/>
            <person name="Cattolico L."/>
            <person name="Confanioleri F."/>
            <person name="de Daruvar A."/>
            <person name="Despons L."/>
            <person name="Fabre E."/>
            <person name="Fairhead C."/>
            <person name="Ferry-Dumazet H."/>
            <person name="Groppi A."/>
            <person name="Hantraye F."/>
            <person name="Hennequin C."/>
            <person name="Jauniaux N."/>
            <person name="Joyet P."/>
            <person name="Kachouri R."/>
            <person name="Kerrest A."/>
            <person name="Koszul R."/>
            <person name="Lemaire M."/>
            <person name="Lesur I."/>
            <person name="Ma L."/>
            <person name="Muller H."/>
            <person name="Nicaud J.-M."/>
            <person name="Nikolski M."/>
            <person name="Oztas S."/>
            <person name="Ozier-Kalogeropoulos O."/>
            <person name="Pellenz S."/>
            <person name="Potier S."/>
            <person name="Richard G.-F."/>
            <person name="Straub M.-L."/>
            <person name="Suleau A."/>
            <person name="Swennen D."/>
            <person name="Tekaia F."/>
            <person name="Wesolowski-Louvel M."/>
            <person name="Westhof E."/>
            <person name="Wirth B."/>
            <person name="Zeniou-Meyer M."/>
            <person name="Zivanovic Y."/>
            <person name="Bolotin-Fukuhara M."/>
            <person name="Thierry A."/>
            <person name="Bouchier C."/>
            <person name="Caudron B."/>
            <person name="Scarpelli C."/>
            <person name="Gaillardin C."/>
            <person name="Weissenbach J."/>
            <person name="Wincker P."/>
            <person name="Souciet J.-L."/>
        </authorList>
    </citation>
    <scope>NUCLEOTIDE SEQUENCE [LARGE SCALE GENOMIC DNA]</scope>
    <source>
        <strain>ATCC 2001 / BCRC 20586 / JCM 3761 / NBRC 0622 / NRRL Y-65 / CBS 138</strain>
    </source>
</reference>
<comment type="function">
    <text evidence="2">Essential core component of the TIM22 complex, a complex that mediates the import and insertion of multi-pass transmembrane proteins into the mitochondrial inner membrane. In the TIM22 complex, it constitutes the voltage-activated and signal-gated channel. Forms a twin-pore translocase that uses the membrane potential as external driving force in 2 voltage-dependent steps (By similarity).</text>
</comment>
<comment type="subunit">
    <text evidence="2">Component of the TIM22 complex, whose core is composed of TIM22 and TIM54, associated with the 70 kDa heterohexamer composed of TIM9 and TIM10 (or TIM8 and TIM13).</text>
</comment>
<comment type="subcellular location">
    <subcellularLocation>
        <location evidence="2">Mitochondrion inner membrane</location>
        <topology evidence="3">Multi-pass membrane protein</topology>
    </subcellularLocation>
</comment>
<comment type="similarity">
    <text evidence="4">Belongs to the Tim17/Tim22/Tim23 family.</text>
</comment>